<name>RRF_LACH4</name>
<evidence type="ECO:0000255" key="1">
    <source>
        <dbReference type="HAMAP-Rule" id="MF_00040"/>
    </source>
</evidence>
<evidence type="ECO:0000256" key="2">
    <source>
        <dbReference type="SAM" id="MobiDB-lite"/>
    </source>
</evidence>
<proteinExistence type="inferred from homology"/>
<dbReference type="EMBL" id="CP000517">
    <property type="protein sequence ID" value="ABX27353.1"/>
    <property type="molecule type" value="Genomic_DNA"/>
</dbReference>
<dbReference type="RefSeq" id="WP_012212007.1">
    <property type="nucleotide sequence ID" value="NC_010080.1"/>
</dbReference>
<dbReference type="SMR" id="A8YVR6"/>
<dbReference type="GeneID" id="83725662"/>
<dbReference type="KEGG" id="lhe:lhv_1353"/>
<dbReference type="eggNOG" id="COG0233">
    <property type="taxonomic scope" value="Bacteria"/>
</dbReference>
<dbReference type="HOGENOM" id="CLU_073981_2_0_9"/>
<dbReference type="Proteomes" id="UP000000790">
    <property type="component" value="Chromosome"/>
</dbReference>
<dbReference type="GO" id="GO:0005737">
    <property type="term" value="C:cytoplasm"/>
    <property type="evidence" value="ECO:0007669"/>
    <property type="project" value="UniProtKB-SubCell"/>
</dbReference>
<dbReference type="GO" id="GO:0043023">
    <property type="term" value="F:ribosomal large subunit binding"/>
    <property type="evidence" value="ECO:0007669"/>
    <property type="project" value="TreeGrafter"/>
</dbReference>
<dbReference type="GO" id="GO:0006415">
    <property type="term" value="P:translational termination"/>
    <property type="evidence" value="ECO:0007669"/>
    <property type="project" value="UniProtKB-UniRule"/>
</dbReference>
<dbReference type="CDD" id="cd00520">
    <property type="entry name" value="RRF"/>
    <property type="match status" value="1"/>
</dbReference>
<dbReference type="FunFam" id="1.10.132.20:FF:000001">
    <property type="entry name" value="Ribosome-recycling factor"/>
    <property type="match status" value="1"/>
</dbReference>
<dbReference type="FunFam" id="3.30.1360.40:FF:000001">
    <property type="entry name" value="Ribosome-recycling factor"/>
    <property type="match status" value="1"/>
</dbReference>
<dbReference type="Gene3D" id="3.30.1360.40">
    <property type="match status" value="1"/>
</dbReference>
<dbReference type="Gene3D" id="1.10.132.20">
    <property type="entry name" value="Ribosome-recycling factor"/>
    <property type="match status" value="1"/>
</dbReference>
<dbReference type="HAMAP" id="MF_00040">
    <property type="entry name" value="RRF"/>
    <property type="match status" value="1"/>
</dbReference>
<dbReference type="InterPro" id="IPR002661">
    <property type="entry name" value="Ribosome_recyc_fac"/>
</dbReference>
<dbReference type="InterPro" id="IPR023584">
    <property type="entry name" value="Ribosome_recyc_fac_dom"/>
</dbReference>
<dbReference type="InterPro" id="IPR036191">
    <property type="entry name" value="RRF_sf"/>
</dbReference>
<dbReference type="NCBIfam" id="TIGR00496">
    <property type="entry name" value="frr"/>
    <property type="match status" value="1"/>
</dbReference>
<dbReference type="PANTHER" id="PTHR20982:SF3">
    <property type="entry name" value="MITOCHONDRIAL RIBOSOME RECYCLING FACTOR PSEUDO 1"/>
    <property type="match status" value="1"/>
</dbReference>
<dbReference type="PANTHER" id="PTHR20982">
    <property type="entry name" value="RIBOSOME RECYCLING FACTOR"/>
    <property type="match status" value="1"/>
</dbReference>
<dbReference type="Pfam" id="PF01765">
    <property type="entry name" value="RRF"/>
    <property type="match status" value="1"/>
</dbReference>
<dbReference type="SUPFAM" id="SSF55194">
    <property type="entry name" value="Ribosome recycling factor, RRF"/>
    <property type="match status" value="1"/>
</dbReference>
<gene>
    <name evidence="1" type="primary">frr</name>
    <name type="ordered locus">lhv_1353</name>
</gene>
<feature type="chain" id="PRO_1000071063" description="Ribosome-recycling factor">
    <location>
        <begin position="1"/>
        <end position="185"/>
    </location>
</feature>
<feature type="region of interest" description="Disordered" evidence="2">
    <location>
        <begin position="140"/>
        <end position="168"/>
    </location>
</feature>
<protein>
    <recommendedName>
        <fullName evidence="1">Ribosome-recycling factor</fullName>
        <shortName evidence="1">RRF</shortName>
    </recommendedName>
    <alternativeName>
        <fullName evidence="1">Ribosome-releasing factor</fullName>
    </alternativeName>
</protein>
<keyword id="KW-0963">Cytoplasm</keyword>
<keyword id="KW-0648">Protein biosynthesis</keyword>
<reference key="1">
    <citation type="journal article" date="2008" name="J. Bacteriol.">
        <title>Genome sequence of Lactobacillus helveticus: an organism distinguished by selective gene loss and IS element expansion.</title>
        <authorList>
            <person name="Callanan M."/>
            <person name="Kaleta P."/>
            <person name="O'Callaghan J."/>
            <person name="O'Sullivan O."/>
            <person name="Jordan K."/>
            <person name="McAuliffe O."/>
            <person name="Sangrador-Vegas A."/>
            <person name="Slattery L."/>
            <person name="Fitzgerald G.F."/>
            <person name="Beresford T."/>
            <person name="Ross R.P."/>
        </authorList>
    </citation>
    <scope>NUCLEOTIDE SEQUENCE [LARGE SCALE GENOMIC DNA]</scope>
    <source>
        <strain>DPC 4571</strain>
    </source>
</reference>
<accession>A8YVR6</accession>
<comment type="function">
    <text evidence="1">Responsible for the release of ribosomes from messenger RNA at the termination of protein biosynthesis. May increase the efficiency of translation by recycling ribosomes from one round of translation to another.</text>
</comment>
<comment type="subcellular location">
    <subcellularLocation>
        <location evidence="1">Cytoplasm</location>
    </subcellularLocation>
</comment>
<comment type="similarity">
    <text evidence="1">Belongs to the RRF family.</text>
</comment>
<organism>
    <name type="scientific">Lactobacillus helveticus (strain DPC 4571)</name>
    <dbReference type="NCBI Taxonomy" id="405566"/>
    <lineage>
        <taxon>Bacteria</taxon>
        <taxon>Bacillati</taxon>
        <taxon>Bacillota</taxon>
        <taxon>Bacilli</taxon>
        <taxon>Lactobacillales</taxon>
        <taxon>Lactobacillaceae</taxon>
        <taxon>Lactobacillus</taxon>
    </lineage>
</organism>
<sequence>MNNETIKKAQDNMDKSIKVYQKRLASIRAGVANAALLDNVQVEYYGAPTPLTQMSSITIPEPRVLLITPYDQNSLDDIEHALLASNLGLTPANDGKVIRLVIPQLTGERREEIAKEVGKYAEDAKIAVRNVRREAMDALKKEQKDGNITEDEQRNLEKQVQKITDDSTKKIDQLADEKRKEITQG</sequence>